<dbReference type="EC" id="7.-.-.-" evidence="2"/>
<dbReference type="EMBL" id="AAEY01000042">
    <property type="protein sequence ID" value="EAL19078.1"/>
    <property type="molecule type" value="Genomic_DNA"/>
</dbReference>
<dbReference type="RefSeq" id="XP_773725.1">
    <property type="nucleotide sequence ID" value="XM_768632.1"/>
</dbReference>
<dbReference type="SMR" id="P0CL93"/>
<dbReference type="GeneID" id="4937702"/>
<dbReference type="KEGG" id="cnb:CNBH1800"/>
<dbReference type="VEuPathDB" id="FungiDB:CNBH1800"/>
<dbReference type="HOGENOM" id="CLU_000604_84_1_1"/>
<dbReference type="OrthoDB" id="5027at5206"/>
<dbReference type="GO" id="GO:0005743">
    <property type="term" value="C:mitochondrial inner membrane"/>
    <property type="evidence" value="ECO:0007669"/>
    <property type="project" value="UniProtKB-SubCell"/>
</dbReference>
<dbReference type="GO" id="GO:0140359">
    <property type="term" value="F:ABC-type transporter activity"/>
    <property type="evidence" value="ECO:0007669"/>
    <property type="project" value="InterPro"/>
</dbReference>
<dbReference type="GO" id="GO:0005524">
    <property type="term" value="F:ATP binding"/>
    <property type="evidence" value="ECO:0007669"/>
    <property type="project" value="UniProtKB-KW"/>
</dbReference>
<dbReference type="GO" id="GO:0016887">
    <property type="term" value="F:ATP hydrolysis activity"/>
    <property type="evidence" value="ECO:0007669"/>
    <property type="project" value="InterPro"/>
</dbReference>
<dbReference type="GO" id="GO:0006879">
    <property type="term" value="P:intracellular iron ion homeostasis"/>
    <property type="evidence" value="ECO:0007669"/>
    <property type="project" value="TreeGrafter"/>
</dbReference>
<dbReference type="CDD" id="cd18582">
    <property type="entry name" value="ABC_6TM_ATM1_ABCB7"/>
    <property type="match status" value="1"/>
</dbReference>
<dbReference type="CDD" id="cd03253">
    <property type="entry name" value="ABCC_ATM1_transporter"/>
    <property type="match status" value="1"/>
</dbReference>
<dbReference type="FunFam" id="1.20.1560.10:FF:000004">
    <property type="entry name" value="ATP-binding cassette sub-family B member 7"/>
    <property type="match status" value="1"/>
</dbReference>
<dbReference type="FunFam" id="3.40.50.300:FF:000186">
    <property type="entry name" value="ATP-binding cassette sub-family B member 7, mitochondrial"/>
    <property type="match status" value="1"/>
</dbReference>
<dbReference type="Gene3D" id="1.20.1560.10">
    <property type="entry name" value="ABC transporter type 1, transmembrane domain"/>
    <property type="match status" value="1"/>
</dbReference>
<dbReference type="Gene3D" id="3.40.50.300">
    <property type="entry name" value="P-loop containing nucleotide triphosphate hydrolases"/>
    <property type="match status" value="1"/>
</dbReference>
<dbReference type="InterPro" id="IPR003593">
    <property type="entry name" value="AAA+_ATPase"/>
</dbReference>
<dbReference type="InterPro" id="IPR011527">
    <property type="entry name" value="ABC1_TM_dom"/>
</dbReference>
<dbReference type="InterPro" id="IPR036640">
    <property type="entry name" value="ABC1_TM_sf"/>
</dbReference>
<dbReference type="InterPro" id="IPR003439">
    <property type="entry name" value="ABC_transporter-like_ATP-bd"/>
</dbReference>
<dbReference type="InterPro" id="IPR017871">
    <property type="entry name" value="ABC_transporter-like_CS"/>
</dbReference>
<dbReference type="InterPro" id="IPR027417">
    <property type="entry name" value="P-loop_NTPase"/>
</dbReference>
<dbReference type="InterPro" id="IPR039421">
    <property type="entry name" value="Type_1_exporter"/>
</dbReference>
<dbReference type="PANTHER" id="PTHR24221">
    <property type="entry name" value="ATP-BINDING CASSETTE SUB-FAMILY B"/>
    <property type="match status" value="1"/>
</dbReference>
<dbReference type="PANTHER" id="PTHR24221:SF402">
    <property type="entry name" value="IRON-SULFUR CLUSTERS TRANSPORTER ABCB7, MITOCHONDRIAL"/>
    <property type="match status" value="1"/>
</dbReference>
<dbReference type="Pfam" id="PF00664">
    <property type="entry name" value="ABC_membrane"/>
    <property type="match status" value="1"/>
</dbReference>
<dbReference type="Pfam" id="PF00005">
    <property type="entry name" value="ABC_tran"/>
    <property type="match status" value="1"/>
</dbReference>
<dbReference type="SMART" id="SM00382">
    <property type="entry name" value="AAA"/>
    <property type="match status" value="1"/>
</dbReference>
<dbReference type="SUPFAM" id="SSF90123">
    <property type="entry name" value="ABC transporter transmembrane region"/>
    <property type="match status" value="1"/>
</dbReference>
<dbReference type="SUPFAM" id="SSF52540">
    <property type="entry name" value="P-loop containing nucleoside triphosphate hydrolases"/>
    <property type="match status" value="1"/>
</dbReference>
<dbReference type="PROSITE" id="PS50929">
    <property type="entry name" value="ABC_TM1F"/>
    <property type="match status" value="1"/>
</dbReference>
<dbReference type="PROSITE" id="PS00211">
    <property type="entry name" value="ABC_TRANSPORTER_1"/>
    <property type="match status" value="1"/>
</dbReference>
<dbReference type="PROSITE" id="PS50893">
    <property type="entry name" value="ABC_TRANSPORTER_2"/>
    <property type="match status" value="1"/>
</dbReference>
<gene>
    <name evidence="8" type="primary">ATM1</name>
    <name type="ordered locus">CNBH1800</name>
</gene>
<sequence>MSFGSCSRHALFTPGALPGSFRTMTTSCVKRVYTAQIRGGDALGKRLPSVSSFPGQLPRHGSHFQSLAFFSTSRRRQTPPPPSPPTTSQSPTVPSKASTTPPTSLNTSKPVATESQDKTDWSIIAKLAGNIWPKNNPNVKFRVIGALTLLVAGKVLNVQVPFFFKTIVDSLNVPITESTTVWVLAGASIAGYGAARVLTTLFGELRNAVFASVAQNAIRKVARETFEHLLNMDMKFHLERQTGGLTRAIDRGTKGISFILSSIVFHVIPTALEISMVCGILSWKFGWDFAAVTAITMLLYTWFTIKTTAWRTTFRKQANAADNKGATVAVDSLINYEAVKSFNNEKYEVAQYDTTLKAYEKASVKIATSLAALNSGQNFIFSSALTMMMLLGAQGIVKGTMTVGDLVLVNQLVFQLSLPLNFLGTVYRELRQSLIDMDVMFNLQSLDSATKDSPTAKPLHLKGGEIEFRNVAFAYHPERPIFRDLSFKIPAGQKVAIVGPSGCGKSTVFRLLFRFYDSSSGQILIDGQDIKTVTLDSLRRSIGVVPQDTPLFHADILHNIRYGNLEATDEQVYEAARKAHVEGTIQRLPEKYATKVGERGLMISGGEKQRLAVARVLLKDPPVLFFDEATSALDVYTETELMRNINSILTGQGKTSVFIAHRLRTISDADLIIVLQDGYVAEQGTHEQLLAMPGGVYHGLWQAQLTESTQPTEEEIERQREELEIVDEKKKQQT</sequence>
<organism>
    <name type="scientific">Cryptococcus neoformans var. neoformans serotype D (strain B-3501A)</name>
    <name type="common">Filobasidiella neoformans</name>
    <dbReference type="NCBI Taxonomy" id="283643"/>
    <lineage>
        <taxon>Eukaryota</taxon>
        <taxon>Fungi</taxon>
        <taxon>Dikarya</taxon>
        <taxon>Basidiomycota</taxon>
        <taxon>Agaricomycotina</taxon>
        <taxon>Tremellomycetes</taxon>
        <taxon>Tremellales</taxon>
        <taxon>Cryptococcaceae</taxon>
        <taxon>Cryptococcus</taxon>
        <taxon>Cryptococcus neoformans species complex</taxon>
    </lineage>
</organism>
<accession>P0CL93</accession>
<accession>Q55NA7</accession>
<accession>Q5KBN9</accession>
<feature type="transit peptide" description="Mitochondrion" evidence="4">
    <location>
        <begin position="1"/>
        <end position="55"/>
    </location>
</feature>
<feature type="chain" id="PRO_0000409997" description="Iron-sulfur clusters transporter ATM1, mitochondrial">
    <location>
        <begin position="56"/>
        <end position="734"/>
    </location>
</feature>
<feature type="topological domain" description="Mitochondrial matrix" evidence="1">
    <location>
        <begin position="56"/>
        <end position="142"/>
    </location>
</feature>
<feature type="transmembrane region" description="Helical" evidence="6">
    <location>
        <begin position="143"/>
        <end position="164"/>
    </location>
</feature>
<feature type="topological domain" description="Mitochondrial intermembrane" evidence="1">
    <location>
        <begin position="165"/>
        <end position="186"/>
    </location>
</feature>
<feature type="transmembrane region" description="Helical" evidence="6">
    <location>
        <begin position="187"/>
        <end position="210"/>
    </location>
</feature>
<feature type="topological domain" description="Mitochondrial matrix" evidence="1">
    <location>
        <begin position="211"/>
        <end position="259"/>
    </location>
</feature>
<feature type="transmembrane region" description="Helical" evidence="6">
    <location>
        <begin position="260"/>
        <end position="283"/>
    </location>
</feature>
<feature type="topological domain" description="Mitochondrial intermembrane" evidence="1">
    <location>
        <position position="284"/>
    </location>
</feature>
<feature type="transmembrane region" description="Helical" evidence="6">
    <location>
        <begin position="285"/>
        <end position="305"/>
    </location>
</feature>
<feature type="topological domain" description="Mitochondrial matrix" evidence="1">
    <location>
        <begin position="306"/>
        <end position="371"/>
    </location>
</feature>
<feature type="transmembrane region" description="Helical" evidence="6">
    <location>
        <begin position="372"/>
        <end position="390"/>
    </location>
</feature>
<feature type="topological domain" description="Mitochondrial intermembrane" evidence="1">
    <location>
        <begin position="391"/>
        <end position="405"/>
    </location>
</feature>
<feature type="transmembrane region" description="Helical" evidence="6">
    <location>
        <begin position="406"/>
        <end position="427"/>
    </location>
</feature>
<feature type="topological domain" description="Mitochondrial matrix" evidence="1">
    <location>
        <begin position="428"/>
        <end position="734"/>
    </location>
</feature>
<feature type="domain" description="ABC transmembrane type-1" evidence="6">
    <location>
        <begin position="143"/>
        <end position="432"/>
    </location>
</feature>
<feature type="domain" description="ABC transporter" evidence="5">
    <location>
        <begin position="466"/>
        <end position="702"/>
    </location>
</feature>
<feature type="region of interest" description="Disordered" evidence="7">
    <location>
        <begin position="72"/>
        <end position="114"/>
    </location>
</feature>
<feature type="region of interest" description="Disordered" evidence="7">
    <location>
        <begin position="708"/>
        <end position="734"/>
    </location>
</feature>
<feature type="compositionally biased region" description="Polar residues" evidence="7">
    <location>
        <begin position="93"/>
        <end position="114"/>
    </location>
</feature>
<feature type="compositionally biased region" description="Basic and acidic residues" evidence="7">
    <location>
        <begin position="717"/>
        <end position="734"/>
    </location>
</feature>
<feature type="binding site" evidence="1">
    <location>
        <begin position="311"/>
        <end position="315"/>
    </location>
    <ligand>
        <name>glutathione</name>
        <dbReference type="ChEBI" id="CHEBI:57925"/>
    </ligand>
</feature>
<feature type="binding site" evidence="1">
    <location>
        <begin position="374"/>
        <end position="377"/>
    </location>
    <ligand>
        <name>glutathione</name>
        <dbReference type="ChEBI" id="CHEBI:57925"/>
    </ligand>
</feature>
<feature type="binding site" evidence="2">
    <location>
        <position position="424"/>
    </location>
    <ligand>
        <name>glutathione</name>
        <dbReference type="ChEBI" id="CHEBI:57925"/>
    </ligand>
</feature>
<feature type="binding site" evidence="3">
    <location>
        <position position="475"/>
    </location>
    <ligand>
        <name>ATP</name>
        <dbReference type="ChEBI" id="CHEBI:30616"/>
    </ligand>
</feature>
<feature type="binding site" evidence="5">
    <location>
        <begin position="499"/>
        <end position="510"/>
    </location>
    <ligand>
        <name>ATP</name>
        <dbReference type="ChEBI" id="CHEBI:30616"/>
    </ligand>
</feature>
<proteinExistence type="inferred from homology"/>
<reference key="1">
    <citation type="journal article" date="2005" name="Science">
        <title>The genome of the basidiomycetous yeast and human pathogen Cryptococcus neoformans.</title>
        <authorList>
            <person name="Loftus B.J."/>
            <person name="Fung E."/>
            <person name="Roncaglia P."/>
            <person name="Rowley D."/>
            <person name="Amedeo P."/>
            <person name="Bruno D."/>
            <person name="Vamathevan J."/>
            <person name="Miranda M."/>
            <person name="Anderson I.J."/>
            <person name="Fraser J.A."/>
            <person name="Allen J.E."/>
            <person name="Bosdet I.E."/>
            <person name="Brent M.R."/>
            <person name="Chiu R."/>
            <person name="Doering T.L."/>
            <person name="Donlin M.J."/>
            <person name="D'Souza C.A."/>
            <person name="Fox D.S."/>
            <person name="Grinberg V."/>
            <person name="Fu J."/>
            <person name="Fukushima M."/>
            <person name="Haas B.J."/>
            <person name="Huang J.C."/>
            <person name="Janbon G."/>
            <person name="Jones S.J.M."/>
            <person name="Koo H.L."/>
            <person name="Krzywinski M.I."/>
            <person name="Kwon-Chung K.J."/>
            <person name="Lengeler K.B."/>
            <person name="Maiti R."/>
            <person name="Marra M.A."/>
            <person name="Marra R.E."/>
            <person name="Mathewson C.A."/>
            <person name="Mitchell T.G."/>
            <person name="Pertea M."/>
            <person name="Riggs F.R."/>
            <person name="Salzberg S.L."/>
            <person name="Schein J.E."/>
            <person name="Shvartsbeyn A."/>
            <person name="Shin H."/>
            <person name="Shumway M."/>
            <person name="Specht C.A."/>
            <person name="Suh B.B."/>
            <person name="Tenney A."/>
            <person name="Utterback T.R."/>
            <person name="Wickes B.L."/>
            <person name="Wortman J.R."/>
            <person name="Wye N.H."/>
            <person name="Kronstad J.W."/>
            <person name="Lodge J.K."/>
            <person name="Heitman J."/>
            <person name="Davis R.W."/>
            <person name="Fraser C.M."/>
            <person name="Hyman R.W."/>
        </authorList>
    </citation>
    <scope>NUCLEOTIDE SEQUENCE [LARGE SCALE GENOMIC DNA]</scope>
    <source>
        <strain>B-3501A</strain>
    </source>
</reference>
<keyword id="KW-0067">ATP-binding</keyword>
<keyword id="KW-0472">Membrane</keyword>
<keyword id="KW-0496">Mitochondrion</keyword>
<keyword id="KW-0999">Mitochondrion inner membrane</keyword>
<keyword id="KW-0547">Nucleotide-binding</keyword>
<keyword id="KW-0809">Transit peptide</keyword>
<keyword id="KW-1278">Translocase</keyword>
<keyword id="KW-0812">Transmembrane</keyword>
<keyword id="KW-1133">Transmembrane helix</keyword>
<keyword id="KW-0813">Transport</keyword>
<comment type="function">
    <text evidence="1">Performs an essential function in the generation of cytoplasmic iron-sulfur proteins by mediating the ATP-dependent export of Fe/S cluster precursors synthesized by NFS1 and other mitochondrial proteins (By similarity). Hydrolyzes ATP (By similarity). Binds glutathione and may function by transporting a glutathione-conjugated iron-sulfur compound (By similarity).</text>
</comment>
<comment type="subunit">
    <text evidence="1">Homodimer.</text>
</comment>
<comment type="subcellular location">
    <subcellularLocation>
        <location evidence="1">Mitochondrion inner membrane</location>
        <topology evidence="6">Multi-pass membrane protein</topology>
    </subcellularLocation>
</comment>
<comment type="similarity">
    <text evidence="8">Belongs to the ABC transporter superfamily. ABCB family. Heavy Metal importer (TC 3.A.1.210) subfamily.</text>
</comment>
<protein>
    <recommendedName>
        <fullName evidence="8">Iron-sulfur clusters transporter ATM1, mitochondrial</fullName>
        <ecNumber evidence="2">7.-.-.-</ecNumber>
    </recommendedName>
</protein>
<evidence type="ECO:0000250" key="1">
    <source>
        <dbReference type="UniProtKB" id="P40416"/>
    </source>
</evidence>
<evidence type="ECO:0000250" key="2">
    <source>
        <dbReference type="UniProtKB" id="Q2G506"/>
    </source>
</evidence>
<evidence type="ECO:0000250" key="3">
    <source>
        <dbReference type="UniProtKB" id="Q9NP58"/>
    </source>
</evidence>
<evidence type="ECO:0000255" key="4"/>
<evidence type="ECO:0000255" key="5">
    <source>
        <dbReference type="PROSITE-ProRule" id="PRU00434"/>
    </source>
</evidence>
<evidence type="ECO:0000255" key="6">
    <source>
        <dbReference type="PROSITE-ProRule" id="PRU00441"/>
    </source>
</evidence>
<evidence type="ECO:0000256" key="7">
    <source>
        <dbReference type="SAM" id="MobiDB-lite"/>
    </source>
</evidence>
<evidence type="ECO:0000305" key="8"/>
<name>ATM1_CRYNB</name>